<sequence>MTGGRFDFDDGGTYCGGWEEGKAHGHGICTGPKGQGEYSGSWSHGFEVVGGYTWPSGNTYQGYWAQGKRHGLGVETKGKWMYRGEWSHGFKGRYGVRQSLCTPARYEGTWSNGLQDGYGVETYGDGGTYQGQWAGGMRHGYGVRQSVPYGMATVIRSPLRTSLASLRSEQSNGSVLHDAAAAADTPTGTRGGFVLNFHADAELAGKKKGGLFRRGSLLGSMKLRKSESKSSISSKRSSVRSDAAMSRISSSDANSTISFGDVDCDFCPVEDHVDATTTETYMGEWKNDKRNGFGISERSNGMKYEGEWANNKRHGYGCTVFPDGSKEEGKYKNNILVRGIRKQLIPIRNTKTREKVDRAIEGAQRAAAMARTKVEIANSRTAHARAKADAADQAALAARQECDIARAVARELSPDFYQPGPDYIKQRLQEGVDAKENPEEKVPAKPPTPKESPHFYRKGTTPPGSPEASPKYSRSPQPSPPKPAKKQNPSSGARLNQDKRGVAEEQVTAIVNKPLTSKAPTKEVGAAVSQSKYSGRHHVPNPSNGELHSQYHGYYVKLHAPQHPPVDAEDDDRSSPSSSALVHKPSPNKWSPPKSVTKPVAKESKAEPKAKKSELAIPKNPASNDSCPSMEREANSGPNSVMIVLVMLLNIGLAILFVHFLT</sequence>
<name>JPH1_RABIT</name>
<dbReference type="EMBL" id="AB023447">
    <property type="protein sequence ID" value="BAB20311.1"/>
    <property type="molecule type" value="mRNA"/>
</dbReference>
<dbReference type="RefSeq" id="NP_001075465.1">
    <property type="nucleotide sequence ID" value="NM_001081996.1"/>
</dbReference>
<dbReference type="RefSeq" id="XP_008253859.1">
    <property type="nucleotide sequence ID" value="XM_008255637.4"/>
</dbReference>
<dbReference type="RefSeq" id="XP_008253860.1">
    <property type="nucleotide sequence ID" value="XM_008255638.4"/>
</dbReference>
<dbReference type="RefSeq" id="XP_008253861.1">
    <property type="nucleotide sequence ID" value="XM_008255639.4"/>
</dbReference>
<dbReference type="SMR" id="Q9GKY8"/>
<dbReference type="FunCoup" id="Q9GKY8">
    <property type="interactions" value="113"/>
</dbReference>
<dbReference type="STRING" id="9986.ENSOCUP00000006651"/>
<dbReference type="PaxDb" id="9986-ENSOCUP00000006651"/>
<dbReference type="Ensembl" id="ENSOCUT00000007691.3">
    <property type="protein sequence ID" value="ENSOCUP00000006651.3"/>
    <property type="gene ID" value="ENSOCUG00000007692.4"/>
</dbReference>
<dbReference type="GeneID" id="100008611"/>
<dbReference type="KEGG" id="ocu:100008611"/>
<dbReference type="CTD" id="56704"/>
<dbReference type="eggNOG" id="KOG0231">
    <property type="taxonomic scope" value="Eukaryota"/>
</dbReference>
<dbReference type="GeneTree" id="ENSGT00940000156130"/>
<dbReference type="InParanoid" id="Q9GKY8"/>
<dbReference type="OrthoDB" id="284854at2759"/>
<dbReference type="Proteomes" id="UP000001811">
    <property type="component" value="Chromosome 3"/>
</dbReference>
<dbReference type="Bgee" id="ENSOCUG00000007692">
    <property type="expression patterns" value="Expressed in skeletal muscle tissue and 15 other cell types or tissues"/>
</dbReference>
<dbReference type="ExpressionAtlas" id="Q9GKY8">
    <property type="expression patterns" value="baseline"/>
</dbReference>
<dbReference type="GO" id="GO:0030314">
    <property type="term" value="C:junctional membrane complex"/>
    <property type="evidence" value="ECO:0007669"/>
    <property type="project" value="Ensembl"/>
</dbReference>
<dbReference type="GO" id="GO:0014701">
    <property type="term" value="C:junctional sarcoplasmic reticulum membrane"/>
    <property type="evidence" value="ECO:0007669"/>
    <property type="project" value="Ensembl"/>
</dbReference>
<dbReference type="GO" id="GO:0005654">
    <property type="term" value="C:nucleoplasm"/>
    <property type="evidence" value="ECO:0007669"/>
    <property type="project" value="Ensembl"/>
</dbReference>
<dbReference type="GO" id="GO:0005886">
    <property type="term" value="C:plasma membrane"/>
    <property type="evidence" value="ECO:0007669"/>
    <property type="project" value="UniProtKB-SubCell"/>
</dbReference>
<dbReference type="GO" id="GO:0030018">
    <property type="term" value="C:Z disc"/>
    <property type="evidence" value="ECO:0007669"/>
    <property type="project" value="Ensembl"/>
</dbReference>
<dbReference type="GO" id="GO:0008307">
    <property type="term" value="F:structural constituent of muscle"/>
    <property type="evidence" value="ECO:0007669"/>
    <property type="project" value="Ensembl"/>
</dbReference>
<dbReference type="GO" id="GO:0007517">
    <property type="term" value="P:muscle organ development"/>
    <property type="evidence" value="ECO:0007669"/>
    <property type="project" value="Ensembl"/>
</dbReference>
<dbReference type="FunFam" id="2.20.110.10:FF:000001">
    <property type="entry name" value="Junctophilin"/>
    <property type="match status" value="1"/>
</dbReference>
<dbReference type="FunFam" id="2.20.110.10:FF:000003">
    <property type="entry name" value="Junctophilin"/>
    <property type="match status" value="1"/>
</dbReference>
<dbReference type="FunFam" id="2.20.110.10:FF:000012">
    <property type="entry name" value="Junctophilin"/>
    <property type="match status" value="1"/>
</dbReference>
<dbReference type="Gene3D" id="2.20.110.10">
    <property type="entry name" value="Histone H3 K4-specific methyltransferase SET7/9 N-terminal domain"/>
    <property type="match status" value="3"/>
</dbReference>
<dbReference type="InterPro" id="IPR017191">
    <property type="entry name" value="Junctophilin"/>
</dbReference>
<dbReference type="InterPro" id="IPR003409">
    <property type="entry name" value="MORN"/>
</dbReference>
<dbReference type="PANTHER" id="PTHR23085">
    <property type="entry name" value="GH28348P"/>
    <property type="match status" value="1"/>
</dbReference>
<dbReference type="PANTHER" id="PTHR23085:SF6">
    <property type="entry name" value="JUNCTOPHILIN-1"/>
    <property type="match status" value="1"/>
</dbReference>
<dbReference type="Pfam" id="PF02493">
    <property type="entry name" value="MORN"/>
    <property type="match status" value="8"/>
</dbReference>
<dbReference type="PIRSF" id="PIRSF037387">
    <property type="entry name" value="Junctophilin"/>
    <property type="match status" value="1"/>
</dbReference>
<dbReference type="SMART" id="SM00698">
    <property type="entry name" value="MORN"/>
    <property type="match status" value="6"/>
</dbReference>
<dbReference type="SUPFAM" id="SSF82185">
    <property type="entry name" value="Histone H3 K4-specific methyltransferase SET7/9 N-terminal domain"/>
    <property type="match status" value="2"/>
</dbReference>
<keyword id="KW-1003">Cell membrane</keyword>
<keyword id="KW-0256">Endoplasmic reticulum</keyword>
<keyword id="KW-0472">Membrane</keyword>
<keyword id="KW-0597">Phosphoprotein</keyword>
<keyword id="KW-1185">Reference proteome</keyword>
<keyword id="KW-0677">Repeat</keyword>
<keyword id="KW-0703">Sarcoplasmic reticulum</keyword>
<keyword id="KW-0812">Transmembrane</keyword>
<keyword id="KW-1133">Transmembrane helix</keyword>
<organism>
    <name type="scientific">Oryctolagus cuniculus</name>
    <name type="common">Rabbit</name>
    <dbReference type="NCBI Taxonomy" id="9986"/>
    <lineage>
        <taxon>Eukaryota</taxon>
        <taxon>Metazoa</taxon>
        <taxon>Chordata</taxon>
        <taxon>Craniata</taxon>
        <taxon>Vertebrata</taxon>
        <taxon>Euteleostomi</taxon>
        <taxon>Mammalia</taxon>
        <taxon>Eutheria</taxon>
        <taxon>Euarchontoglires</taxon>
        <taxon>Glires</taxon>
        <taxon>Lagomorpha</taxon>
        <taxon>Leporidae</taxon>
        <taxon>Oryctolagus</taxon>
    </lineage>
</organism>
<gene>
    <name type="primary">JPH1</name>
    <name type="synonym">JP1</name>
    <name type="synonym">MG72</name>
</gene>
<comment type="function">
    <text evidence="1">Junctophilins contribute to the formation of junctional membrane complexes (JMCs) which link the plasma membrane with the endoplasmic or sarcoplasmic reticulum in excitable cells. Provides a structural foundation for functional cross-talk between the cell surface and intracellular calcium release channels. JPH1 contributes to the construction of the skeletal muscle triad by linking the t-tubule (transverse-tubule) and SR (sarcoplasmic reticulum) membranes (By similarity).</text>
</comment>
<comment type="subcellular location">
    <subcellularLocation>
        <location evidence="1">Cell membrane</location>
        <topology evidence="1">Peripheral membrane protein</topology>
    </subcellularLocation>
    <subcellularLocation>
        <location evidence="1">Endoplasmic reticulum membrane</location>
        <topology evidence="1">Single-pass type IV membrane protein</topology>
    </subcellularLocation>
    <subcellularLocation>
        <location evidence="1">Sarcoplasmic reticulum membrane</location>
        <topology evidence="1">Single-pass type IV membrane protein</topology>
    </subcellularLocation>
    <text evidence="1">Localized predominantly on the plasma membrane. The transmembrane domain is anchored in endoplasmic/sarcoplasmic reticulum membrane, while the N-terminal part associates with the plasma membrane. In skeletal muscle cells, it is predominantly localized at the junction of the A and I bands (By similarity).</text>
</comment>
<comment type="domain">
    <text>The MORN (membrane occupation and recognition nexus) repeats contribute to the plasma membrane binding, possibly by interacting with phospholipids.</text>
</comment>
<comment type="similarity">
    <text evidence="5">Belongs to the junctophilin family.</text>
</comment>
<proteinExistence type="evidence at transcript level"/>
<feature type="chain" id="PRO_0000159846" description="Junctophilin-1">
    <location>
        <begin position="1"/>
        <end position="662"/>
    </location>
</feature>
<feature type="topological domain" description="Cytoplasmic" evidence="3">
    <location>
        <begin position="1"/>
        <end position="640"/>
    </location>
</feature>
<feature type="transmembrane region" description="Helical; Anchor for type IV membrane protein" evidence="3">
    <location>
        <begin position="641"/>
        <end position="661"/>
    </location>
</feature>
<feature type="repeat" description="MORN 1">
    <location>
        <begin position="14"/>
        <end position="36"/>
    </location>
</feature>
<feature type="repeat" description="MORN 2">
    <location>
        <begin position="38"/>
        <end position="59"/>
    </location>
</feature>
<feature type="repeat" description="MORN 3">
    <location>
        <begin position="60"/>
        <end position="82"/>
    </location>
</feature>
<feature type="repeat" description="MORN 4">
    <location>
        <begin position="106"/>
        <end position="128"/>
    </location>
</feature>
<feature type="repeat" description="MORN 5">
    <location>
        <begin position="129"/>
        <end position="151"/>
    </location>
</feature>
<feature type="repeat" description="MORN 6">
    <location>
        <begin position="281"/>
        <end position="303"/>
    </location>
</feature>
<feature type="repeat" description="MORN 7">
    <location>
        <begin position="304"/>
        <end position="326"/>
    </location>
</feature>
<feature type="region of interest" description="Disordered" evidence="4">
    <location>
        <begin position="228"/>
        <end position="247"/>
    </location>
</feature>
<feature type="region of interest" description="Disordered" evidence="4">
    <location>
        <begin position="432"/>
        <end position="634"/>
    </location>
</feature>
<feature type="compositionally biased region" description="Basic and acidic residues" evidence="4">
    <location>
        <begin position="432"/>
        <end position="443"/>
    </location>
</feature>
<feature type="compositionally biased region" description="Low complexity" evidence="4">
    <location>
        <begin position="584"/>
        <end position="599"/>
    </location>
</feature>
<feature type="compositionally biased region" description="Basic and acidic residues" evidence="4">
    <location>
        <begin position="600"/>
        <end position="614"/>
    </location>
</feature>
<feature type="modified residue" description="Phosphoserine" evidence="2">
    <location>
        <position position="157"/>
    </location>
</feature>
<feature type="modified residue" description="Phosphoserine" evidence="2">
    <location>
        <position position="216"/>
    </location>
</feature>
<feature type="modified residue" description="Phosphoserine" evidence="2">
    <location>
        <position position="220"/>
    </location>
</feature>
<feature type="modified residue" description="Phosphothreonine" evidence="2">
    <location>
        <position position="448"/>
    </location>
</feature>
<feature type="modified residue" description="Phosphoserine" evidence="2">
    <location>
        <position position="452"/>
    </location>
</feature>
<feature type="modified residue" description="Phosphothreonine" evidence="2">
    <location>
        <position position="461"/>
    </location>
</feature>
<feature type="modified residue" description="Phosphoserine" evidence="2">
    <location>
        <position position="465"/>
    </location>
</feature>
<feature type="modified residue" description="Phosphoserine" evidence="2">
    <location>
        <position position="469"/>
    </location>
</feature>
<feature type="modified residue" description="Phosphoserine" evidence="2">
    <location>
        <position position="475"/>
    </location>
</feature>
<evidence type="ECO:0000250" key="1"/>
<evidence type="ECO:0000250" key="2">
    <source>
        <dbReference type="UniProtKB" id="Q9HDC5"/>
    </source>
</evidence>
<evidence type="ECO:0000255" key="3"/>
<evidence type="ECO:0000256" key="4">
    <source>
        <dbReference type="SAM" id="MobiDB-lite"/>
    </source>
</evidence>
<evidence type="ECO:0000305" key="5"/>
<reference key="1">
    <citation type="journal article" date="2000" name="Mol. Cell">
        <title>Junctophilins: a novel family of junctional membrane complex proteins.</title>
        <authorList>
            <person name="Takeshima H."/>
            <person name="Komazaki S."/>
            <person name="Nishi M."/>
            <person name="Iino M."/>
            <person name="Kangawa K."/>
        </authorList>
    </citation>
    <scope>NUCLEOTIDE SEQUENCE [MRNA]</scope>
    <source>
        <tissue>Skeletal muscle</tissue>
    </source>
</reference>
<protein>
    <recommendedName>
        <fullName>Junctophilin-1</fullName>
        <shortName>JP-1</shortName>
    </recommendedName>
    <alternativeName>
        <fullName>Junctophilin type 1</fullName>
    </alternativeName>
    <alternativeName>
        <fullName>Mitsugumin-72</fullName>
        <shortName>Mg72</shortName>
    </alternativeName>
</protein>
<accession>Q9GKY8</accession>